<organism>
    <name type="scientific">Escherichia coli (strain K12)</name>
    <dbReference type="NCBI Taxonomy" id="83333"/>
    <lineage>
        <taxon>Bacteria</taxon>
        <taxon>Pseudomonadati</taxon>
        <taxon>Pseudomonadota</taxon>
        <taxon>Gammaproteobacteria</taxon>
        <taxon>Enterobacterales</taxon>
        <taxon>Enterobacteriaceae</taxon>
        <taxon>Escherichia</taxon>
    </lineage>
</organism>
<name>FLIP_ECOLI</name>
<dbReference type="EMBL" id="L22182">
    <property type="protein sequence ID" value="AAC36859.1"/>
    <property type="molecule type" value="Genomic_DNA"/>
</dbReference>
<dbReference type="EMBL" id="AP009048">
    <property type="protein sequence ID" value="BAA15773.1"/>
    <property type="molecule type" value="Genomic_DNA"/>
</dbReference>
<dbReference type="EMBL" id="U00096">
    <property type="protein sequence ID" value="AAC75015.1"/>
    <property type="molecule type" value="Genomic_DNA"/>
</dbReference>
<dbReference type="PIR" id="B36869">
    <property type="entry name" value="B36869"/>
</dbReference>
<dbReference type="RefSeq" id="NP_416458.1">
    <property type="nucleotide sequence ID" value="NC_000913.3"/>
</dbReference>
<dbReference type="RefSeq" id="WP_001253441.1">
    <property type="nucleotide sequence ID" value="NZ_STEB01000050.1"/>
</dbReference>
<dbReference type="SMR" id="P0AC05"/>
<dbReference type="BioGRID" id="4261044">
    <property type="interactions" value="438"/>
</dbReference>
<dbReference type="ComplexPortal" id="CPX-5885">
    <property type="entry name" value="Flagellar export complex"/>
</dbReference>
<dbReference type="FunCoup" id="P0AC05">
    <property type="interactions" value="117"/>
</dbReference>
<dbReference type="STRING" id="511145.b1948"/>
<dbReference type="PaxDb" id="511145-b1948"/>
<dbReference type="EnsemblBacteria" id="AAC75015">
    <property type="protein sequence ID" value="AAC75015"/>
    <property type="gene ID" value="b1948"/>
</dbReference>
<dbReference type="GeneID" id="75172067"/>
<dbReference type="GeneID" id="946462"/>
<dbReference type="KEGG" id="ecj:JW1932"/>
<dbReference type="KEGG" id="eco:b1948"/>
<dbReference type="KEGG" id="ecoc:C3026_11030"/>
<dbReference type="PATRIC" id="fig|1411691.4.peg.303"/>
<dbReference type="EchoBASE" id="EB1918"/>
<dbReference type="eggNOG" id="COG1338">
    <property type="taxonomic scope" value="Bacteria"/>
</dbReference>
<dbReference type="HOGENOM" id="CLU_042028_0_1_6"/>
<dbReference type="InParanoid" id="P0AC05"/>
<dbReference type="OMA" id="MMMLPPI"/>
<dbReference type="OrthoDB" id="9805111at2"/>
<dbReference type="PhylomeDB" id="P0AC05"/>
<dbReference type="BioCyc" id="EcoCyc:EG11975-MONOMER"/>
<dbReference type="PRO" id="PR:P0AC05"/>
<dbReference type="Proteomes" id="UP000000625">
    <property type="component" value="Chromosome"/>
</dbReference>
<dbReference type="GO" id="GO:0009288">
    <property type="term" value="C:bacterial-type flagellum"/>
    <property type="evidence" value="ECO:0000303"/>
    <property type="project" value="ComplexPortal"/>
</dbReference>
<dbReference type="GO" id="GO:0120102">
    <property type="term" value="C:bacterial-type flagellum secretion apparatus"/>
    <property type="evidence" value="ECO:0000303"/>
    <property type="project" value="ComplexPortal"/>
</dbReference>
<dbReference type="GO" id="GO:0005886">
    <property type="term" value="C:plasma membrane"/>
    <property type="evidence" value="ECO:0000314"/>
    <property type="project" value="EcoCyc"/>
</dbReference>
<dbReference type="GO" id="GO:0030257">
    <property type="term" value="C:type III protein secretion system complex"/>
    <property type="evidence" value="ECO:0000303"/>
    <property type="project" value="ComplexPortal"/>
</dbReference>
<dbReference type="GO" id="GO:0044780">
    <property type="term" value="P:bacterial-type flagellum assembly"/>
    <property type="evidence" value="ECO:0000318"/>
    <property type="project" value="GO_Central"/>
</dbReference>
<dbReference type="GO" id="GO:0071973">
    <property type="term" value="P:bacterial-type flagellum-dependent cell motility"/>
    <property type="evidence" value="ECO:0000303"/>
    <property type="project" value="ComplexPortal"/>
</dbReference>
<dbReference type="GO" id="GO:0071978">
    <property type="term" value="P:bacterial-type flagellum-dependent swarming motility"/>
    <property type="evidence" value="ECO:0000318"/>
    <property type="project" value="GO_Central"/>
</dbReference>
<dbReference type="GO" id="GO:0006935">
    <property type="term" value="P:chemotaxis"/>
    <property type="evidence" value="ECO:0000303"/>
    <property type="project" value="ComplexPortal"/>
</dbReference>
<dbReference type="GO" id="GO:0030254">
    <property type="term" value="P:protein secretion by the type III secretion system"/>
    <property type="evidence" value="ECO:0000303"/>
    <property type="project" value="ComplexPortal"/>
</dbReference>
<dbReference type="InterPro" id="IPR005837">
    <property type="entry name" value="FliP"/>
</dbReference>
<dbReference type="InterPro" id="IPR005838">
    <property type="entry name" value="T3SS_IM_P"/>
</dbReference>
<dbReference type="NCBIfam" id="TIGR01103">
    <property type="entry name" value="fliP"/>
    <property type="match status" value="1"/>
</dbReference>
<dbReference type="NCBIfam" id="NF009438">
    <property type="entry name" value="PRK12797.1"/>
    <property type="match status" value="1"/>
</dbReference>
<dbReference type="PANTHER" id="PTHR30587">
    <property type="entry name" value="FLAGELLAR BIOSYNTHETIC PROTEIN FLIP"/>
    <property type="match status" value="1"/>
</dbReference>
<dbReference type="PANTHER" id="PTHR30587:SF0">
    <property type="entry name" value="FLAGELLAR BIOSYNTHETIC PROTEIN FLIP"/>
    <property type="match status" value="1"/>
</dbReference>
<dbReference type="Pfam" id="PF00813">
    <property type="entry name" value="FliP"/>
    <property type="match status" value="1"/>
</dbReference>
<dbReference type="PRINTS" id="PR00951">
    <property type="entry name" value="FLGBIOSNFLIP"/>
</dbReference>
<dbReference type="PRINTS" id="PR01302">
    <property type="entry name" value="TYPE3IMPPROT"/>
</dbReference>
<dbReference type="PROSITE" id="PS01060">
    <property type="entry name" value="FLIP_1"/>
    <property type="match status" value="1"/>
</dbReference>
<dbReference type="PROSITE" id="PS01061">
    <property type="entry name" value="FLIP_2"/>
    <property type="match status" value="1"/>
</dbReference>
<proteinExistence type="inferred from homology"/>
<comment type="function">
    <text>Plays a role in the flagellum-specific transport system.</text>
</comment>
<comment type="subcellular location">
    <subcellularLocation>
        <location evidence="3">Cell inner membrane</location>
        <topology evidence="3">Multi-pass membrane protein</topology>
    </subcellularLocation>
    <subcellularLocation>
        <location evidence="3">Bacterial flagellum basal body</location>
    </subcellularLocation>
</comment>
<comment type="similarity">
    <text evidence="4">Belongs to the FliP/MopC/SpaP family.</text>
</comment>
<feature type="signal peptide" evidence="1">
    <location>
        <begin position="1"/>
        <end position="21"/>
    </location>
</feature>
<feature type="chain" id="PRO_0000009535" description="Flagellar biosynthetic protein FliP">
    <location>
        <begin position="22"/>
        <end position="245"/>
    </location>
</feature>
<feature type="transmembrane region" description="Helical" evidence="2">
    <location>
        <begin position="45"/>
        <end position="65"/>
    </location>
</feature>
<feature type="transmembrane region" description="Helical" evidence="2">
    <location>
        <begin position="88"/>
        <end position="108"/>
    </location>
</feature>
<feature type="transmembrane region" description="Helical" evidence="2">
    <location>
        <begin position="185"/>
        <end position="205"/>
    </location>
</feature>
<feature type="transmembrane region" description="Helical" evidence="2">
    <location>
        <begin position="209"/>
        <end position="229"/>
    </location>
</feature>
<keyword id="KW-0975">Bacterial flagellum</keyword>
<keyword id="KW-1005">Bacterial flagellum biogenesis</keyword>
<keyword id="KW-1006">Bacterial flagellum protein export</keyword>
<keyword id="KW-0997">Cell inner membrane</keyword>
<keyword id="KW-1003">Cell membrane</keyword>
<keyword id="KW-0472">Membrane</keyword>
<keyword id="KW-0653">Protein transport</keyword>
<keyword id="KW-1185">Reference proteome</keyword>
<keyword id="KW-0732">Signal</keyword>
<keyword id="KW-0812">Transmembrane</keyword>
<keyword id="KW-1133">Transmembrane helix</keyword>
<keyword id="KW-0813">Transport</keyword>
<gene>
    <name type="primary">fliP</name>
    <name type="synonym">flaR</name>
    <name type="ordered locus">b1948</name>
    <name type="ordered locus">JW1932</name>
</gene>
<accession>P0AC05</accession>
<accession>P33133</accession>
<protein>
    <recommendedName>
        <fullName>Flagellar biosynthetic protein FliP</fullName>
    </recommendedName>
</protein>
<evidence type="ECO:0000250" key="1"/>
<evidence type="ECO:0000255" key="2"/>
<evidence type="ECO:0000269" key="3">
    <source>
    </source>
</evidence>
<evidence type="ECO:0000305" key="4"/>
<reference key="1">
    <citation type="journal article" date="1994" name="J. Bacteriol.">
        <title>Molecular characterization, nucleotide sequence, and expression of the fliO, fliP, fliQ, and fliR genes of Escherichia coli.</title>
        <authorList>
            <person name="Malakooti J."/>
            <person name="Ely B."/>
            <person name="Matsumura P."/>
        </authorList>
    </citation>
    <scope>NUCLEOTIDE SEQUENCE [GENOMIC DNA]</scope>
    <source>
        <strain>K12</strain>
    </source>
</reference>
<reference key="2">
    <citation type="journal article" date="1996" name="DNA Res.">
        <title>A 460-kb DNA sequence of the Escherichia coli K-12 genome corresponding to the 40.1-50.0 min region on the linkage map.</title>
        <authorList>
            <person name="Itoh T."/>
            <person name="Aiba H."/>
            <person name="Baba T."/>
            <person name="Fujita K."/>
            <person name="Hayashi K."/>
            <person name="Inada T."/>
            <person name="Isono K."/>
            <person name="Kasai H."/>
            <person name="Kimura S."/>
            <person name="Kitakawa M."/>
            <person name="Kitagawa M."/>
            <person name="Makino K."/>
            <person name="Miki T."/>
            <person name="Mizobuchi K."/>
            <person name="Mori H."/>
            <person name="Mori T."/>
            <person name="Motomura K."/>
            <person name="Nakade S."/>
            <person name="Nakamura Y."/>
            <person name="Nashimoto H."/>
            <person name="Nishio Y."/>
            <person name="Oshima T."/>
            <person name="Saito N."/>
            <person name="Sampei G."/>
            <person name="Seki Y."/>
            <person name="Sivasundaram S."/>
            <person name="Tagami H."/>
            <person name="Takeda J."/>
            <person name="Takemoto K."/>
            <person name="Wada C."/>
            <person name="Yamamoto Y."/>
            <person name="Horiuchi T."/>
        </authorList>
    </citation>
    <scope>NUCLEOTIDE SEQUENCE [LARGE SCALE GENOMIC DNA]</scope>
    <source>
        <strain>K12 / W3110 / ATCC 27325 / DSM 5911</strain>
    </source>
</reference>
<reference key="3">
    <citation type="journal article" date="1997" name="Science">
        <title>The complete genome sequence of Escherichia coli K-12.</title>
        <authorList>
            <person name="Blattner F.R."/>
            <person name="Plunkett G. III"/>
            <person name="Bloch C.A."/>
            <person name="Perna N.T."/>
            <person name="Burland V."/>
            <person name="Riley M."/>
            <person name="Collado-Vides J."/>
            <person name="Glasner J.D."/>
            <person name="Rode C.K."/>
            <person name="Mayhew G.F."/>
            <person name="Gregor J."/>
            <person name="Davis N.W."/>
            <person name="Kirkpatrick H.A."/>
            <person name="Goeden M.A."/>
            <person name="Rose D.J."/>
            <person name="Mau B."/>
            <person name="Shao Y."/>
        </authorList>
    </citation>
    <scope>NUCLEOTIDE SEQUENCE [LARGE SCALE GENOMIC DNA]</scope>
    <source>
        <strain>K12 / MG1655 / ATCC 47076</strain>
    </source>
</reference>
<reference key="4">
    <citation type="journal article" date="2006" name="Mol. Syst. Biol.">
        <title>Highly accurate genome sequences of Escherichia coli K-12 strains MG1655 and W3110.</title>
        <authorList>
            <person name="Hayashi K."/>
            <person name="Morooka N."/>
            <person name="Yamamoto Y."/>
            <person name="Fujita K."/>
            <person name="Isono K."/>
            <person name="Choi S."/>
            <person name="Ohtsubo E."/>
            <person name="Baba T."/>
            <person name="Wanner B.L."/>
            <person name="Mori H."/>
            <person name="Horiuchi T."/>
        </authorList>
    </citation>
    <scope>NUCLEOTIDE SEQUENCE [LARGE SCALE GENOMIC DNA]</scope>
    <source>
        <strain>K12 / W3110 / ATCC 27325 / DSM 5911</strain>
    </source>
</reference>
<reference key="5">
    <citation type="journal article" date="2005" name="Science">
        <title>Global topology analysis of the Escherichia coli inner membrane proteome.</title>
        <authorList>
            <person name="Daley D.O."/>
            <person name="Rapp M."/>
            <person name="Granseth E."/>
            <person name="Melen K."/>
            <person name="Drew D."/>
            <person name="von Heijne G."/>
        </authorList>
    </citation>
    <scope>SUBCELLULAR LOCATION</scope>
    <source>
        <strain>K12 / MG1655 / ATCC 47076</strain>
    </source>
</reference>
<sequence>MRRLLSVAPVLLWLITPLAFAQLPGITSQPLPGGGQSWSLPVQTLVFITSLTFIPAILLMMTSFTRIIIVFGLLRNALGTPSAPPNQVLLGLALFLTFFIMSPVIDKIYVDAYQPFSEEKISMQEALEKGAQPLREFMLRQTREADLGLFARLANTGPLQGPEAVPMRILLPAYVTSELKTAFQIGFTIFIPFLIIDLVIASVLMALGMMMVPPATIALPFKLMLFVLVDGWQLLVGSLAQSFYS</sequence>